<accession>A4G0E3</accession>
<reference key="1">
    <citation type="submission" date="2007-03" db="EMBL/GenBank/DDBJ databases">
        <title>Complete sequence of chromosome of Methanococcus maripaludis C5.</title>
        <authorList>
            <consortium name="US DOE Joint Genome Institute"/>
            <person name="Copeland A."/>
            <person name="Lucas S."/>
            <person name="Lapidus A."/>
            <person name="Barry K."/>
            <person name="Glavina del Rio T."/>
            <person name="Dalin E."/>
            <person name="Tice H."/>
            <person name="Pitluck S."/>
            <person name="Chertkov O."/>
            <person name="Brettin T."/>
            <person name="Bruce D."/>
            <person name="Han C."/>
            <person name="Detter J.C."/>
            <person name="Schmutz J."/>
            <person name="Larimer F."/>
            <person name="Land M."/>
            <person name="Hauser L."/>
            <person name="Kyrpides N."/>
            <person name="Mikhailova N."/>
            <person name="Sieprawska-Lupa M."/>
            <person name="Whitman W.B."/>
            <person name="Richardson P."/>
        </authorList>
    </citation>
    <scope>NUCLEOTIDE SEQUENCE [LARGE SCALE GENOMIC DNA]</scope>
    <source>
        <strain>C5 / ATCC BAA-1333</strain>
    </source>
</reference>
<sequence length="137" mass="14953">MVKLGFVIAEFNRDLTFMMEKLAEEHAAFLGADVSCKVMVPGSFDMPLAIKTLLQKDDIDAVVTIGCVIEGDTEHDEIVVQNAARKIADLSLEFGKPVALGIAGPGMTRMQAEDRIDYGKNAVEAAVKMVKRLKEIQ</sequence>
<gene>
    <name evidence="1" type="primary">ribH</name>
    <name type="ordered locus">MmarC5_1630</name>
</gene>
<protein>
    <recommendedName>
        <fullName evidence="1">6,7-dimethyl-8-ribityllumazine synthase</fullName>
        <shortName evidence="1">DMRL synthase</shortName>
        <shortName evidence="1">LS</shortName>
        <shortName evidence="1">Lumazine synthase</shortName>
        <ecNumber evidence="1">2.5.1.78</ecNumber>
    </recommendedName>
</protein>
<proteinExistence type="inferred from homology"/>
<dbReference type="EC" id="2.5.1.78" evidence="1"/>
<dbReference type="EMBL" id="CP000609">
    <property type="protein sequence ID" value="ABO35927.1"/>
    <property type="molecule type" value="Genomic_DNA"/>
</dbReference>
<dbReference type="RefSeq" id="WP_011869374.1">
    <property type="nucleotide sequence ID" value="NC_009135.1"/>
</dbReference>
<dbReference type="SMR" id="A4G0E3"/>
<dbReference type="STRING" id="402880.MmarC5_1630"/>
<dbReference type="GeneID" id="4928619"/>
<dbReference type="KEGG" id="mmq:MmarC5_1630"/>
<dbReference type="eggNOG" id="arCOG01323">
    <property type="taxonomic scope" value="Archaea"/>
</dbReference>
<dbReference type="HOGENOM" id="CLU_089358_3_1_2"/>
<dbReference type="OrthoDB" id="7610at2157"/>
<dbReference type="UniPathway" id="UPA00275">
    <property type="reaction ID" value="UER00404"/>
</dbReference>
<dbReference type="Proteomes" id="UP000000253">
    <property type="component" value="Chromosome"/>
</dbReference>
<dbReference type="GO" id="GO:0009349">
    <property type="term" value="C:riboflavin synthase complex"/>
    <property type="evidence" value="ECO:0007669"/>
    <property type="project" value="InterPro"/>
</dbReference>
<dbReference type="GO" id="GO:0000906">
    <property type="term" value="F:6,7-dimethyl-8-ribityllumazine synthase activity"/>
    <property type="evidence" value="ECO:0007669"/>
    <property type="project" value="UniProtKB-UniRule"/>
</dbReference>
<dbReference type="GO" id="GO:0009231">
    <property type="term" value="P:riboflavin biosynthetic process"/>
    <property type="evidence" value="ECO:0007669"/>
    <property type="project" value="UniProtKB-UniRule"/>
</dbReference>
<dbReference type="CDD" id="cd09211">
    <property type="entry name" value="Lumazine_synthase_archaeal"/>
    <property type="match status" value="1"/>
</dbReference>
<dbReference type="FunFam" id="3.40.50.960:FF:000003">
    <property type="entry name" value="6,7-dimethyl-8-ribityllumazine synthase"/>
    <property type="match status" value="1"/>
</dbReference>
<dbReference type="Gene3D" id="3.40.50.960">
    <property type="entry name" value="Lumazine/riboflavin synthase"/>
    <property type="match status" value="1"/>
</dbReference>
<dbReference type="HAMAP" id="MF_00178">
    <property type="entry name" value="Lumazine_synth"/>
    <property type="match status" value="1"/>
</dbReference>
<dbReference type="InterPro" id="IPR034964">
    <property type="entry name" value="LS"/>
</dbReference>
<dbReference type="InterPro" id="IPR002180">
    <property type="entry name" value="LS/RS"/>
</dbReference>
<dbReference type="InterPro" id="IPR036467">
    <property type="entry name" value="LS/RS_sf"/>
</dbReference>
<dbReference type="NCBIfam" id="TIGR00114">
    <property type="entry name" value="lumazine-synth"/>
    <property type="match status" value="1"/>
</dbReference>
<dbReference type="PANTHER" id="PTHR21058:SF0">
    <property type="entry name" value="6,7-DIMETHYL-8-RIBITYLLUMAZINE SYNTHASE"/>
    <property type="match status" value="1"/>
</dbReference>
<dbReference type="PANTHER" id="PTHR21058">
    <property type="entry name" value="6,7-DIMETHYL-8-RIBITYLLUMAZINE SYNTHASE DMRL SYNTHASE LUMAZINE SYNTHASE"/>
    <property type="match status" value="1"/>
</dbReference>
<dbReference type="Pfam" id="PF00885">
    <property type="entry name" value="DMRL_synthase"/>
    <property type="match status" value="1"/>
</dbReference>
<dbReference type="SUPFAM" id="SSF52121">
    <property type="entry name" value="Lumazine synthase"/>
    <property type="match status" value="1"/>
</dbReference>
<organism>
    <name type="scientific">Methanococcus maripaludis (strain C5 / ATCC BAA-1333)</name>
    <dbReference type="NCBI Taxonomy" id="402880"/>
    <lineage>
        <taxon>Archaea</taxon>
        <taxon>Methanobacteriati</taxon>
        <taxon>Methanobacteriota</taxon>
        <taxon>Methanomada group</taxon>
        <taxon>Methanococci</taxon>
        <taxon>Methanococcales</taxon>
        <taxon>Methanococcaceae</taxon>
        <taxon>Methanococcus</taxon>
    </lineage>
</organism>
<comment type="function">
    <text evidence="1">Catalyzes the formation of 6,7-dimethyl-8-ribityllumazine by condensation of 5-amino-6-(D-ribitylamino)uracil with 3,4-dihydroxy-2-butanone 4-phosphate. This is the penultimate step in the biosynthesis of riboflavin.</text>
</comment>
<comment type="catalytic activity">
    <reaction evidence="1">
        <text>(2S)-2-hydroxy-3-oxobutyl phosphate + 5-amino-6-(D-ribitylamino)uracil = 6,7-dimethyl-8-(1-D-ribityl)lumazine + phosphate + 2 H2O + H(+)</text>
        <dbReference type="Rhea" id="RHEA:26152"/>
        <dbReference type="ChEBI" id="CHEBI:15377"/>
        <dbReference type="ChEBI" id="CHEBI:15378"/>
        <dbReference type="ChEBI" id="CHEBI:15934"/>
        <dbReference type="ChEBI" id="CHEBI:43474"/>
        <dbReference type="ChEBI" id="CHEBI:58201"/>
        <dbReference type="ChEBI" id="CHEBI:58830"/>
        <dbReference type="EC" id="2.5.1.78"/>
    </reaction>
</comment>
<comment type="pathway">
    <text evidence="1">Cofactor biosynthesis; riboflavin biosynthesis; riboflavin from 2-hydroxy-3-oxobutyl phosphate and 5-amino-6-(D-ribitylamino)uracil: step 1/2.</text>
</comment>
<comment type="subunit">
    <text evidence="1">Forms an icosahedral capsid composed of 60 subunits, arranged as a dodecamer of pentamers.</text>
</comment>
<comment type="similarity">
    <text evidence="1">Belongs to the DMRL synthase family.</text>
</comment>
<name>RISB_METM5</name>
<evidence type="ECO:0000255" key="1">
    <source>
        <dbReference type="HAMAP-Rule" id="MF_00178"/>
    </source>
</evidence>
<feature type="chain" id="PRO_1000040448" description="6,7-dimethyl-8-ribityllumazine synthase">
    <location>
        <begin position="1"/>
        <end position="137"/>
    </location>
</feature>
<feature type="active site" description="Proton donor" evidence="1">
    <location>
        <position position="75"/>
    </location>
</feature>
<feature type="binding site" evidence="1">
    <location>
        <position position="11"/>
    </location>
    <ligand>
        <name>5-amino-6-(D-ribitylamino)uracil</name>
        <dbReference type="ChEBI" id="CHEBI:15934"/>
    </ligand>
</feature>
<feature type="binding site" evidence="1">
    <location>
        <begin position="43"/>
        <end position="45"/>
    </location>
    <ligand>
        <name>5-amino-6-(D-ribitylamino)uracil</name>
        <dbReference type="ChEBI" id="CHEBI:15934"/>
    </ligand>
</feature>
<feature type="binding site" evidence="1">
    <location>
        <begin position="67"/>
        <end position="69"/>
    </location>
    <ligand>
        <name>5-amino-6-(D-ribitylamino)uracil</name>
        <dbReference type="ChEBI" id="CHEBI:15934"/>
    </ligand>
</feature>
<feature type="binding site" evidence="1">
    <location>
        <begin position="72"/>
        <end position="73"/>
    </location>
    <ligand>
        <name>(2S)-2-hydroxy-3-oxobutyl phosphate</name>
        <dbReference type="ChEBI" id="CHEBI:58830"/>
    </ligand>
</feature>
<feature type="binding site" evidence="1">
    <location>
        <position position="100"/>
    </location>
    <ligand>
        <name>5-amino-6-(D-ribitylamino)uracil</name>
        <dbReference type="ChEBI" id="CHEBI:15934"/>
    </ligand>
</feature>
<feature type="binding site" evidence="1">
    <location>
        <position position="115"/>
    </location>
    <ligand>
        <name>(2S)-2-hydroxy-3-oxobutyl phosphate</name>
        <dbReference type="ChEBI" id="CHEBI:58830"/>
    </ligand>
</feature>
<keyword id="KW-0686">Riboflavin biosynthesis</keyword>
<keyword id="KW-0808">Transferase</keyword>